<feature type="chain" id="PRO_0000385868" description="GTPase Obg">
    <location>
        <begin position="1"/>
        <end position="365"/>
    </location>
</feature>
<feature type="domain" description="Obg" evidence="2">
    <location>
        <begin position="1"/>
        <end position="159"/>
    </location>
</feature>
<feature type="domain" description="OBG-type G" evidence="1">
    <location>
        <begin position="160"/>
        <end position="334"/>
    </location>
</feature>
<feature type="binding site" evidence="1">
    <location>
        <begin position="166"/>
        <end position="173"/>
    </location>
    <ligand>
        <name>GTP</name>
        <dbReference type="ChEBI" id="CHEBI:37565"/>
    </ligand>
</feature>
<feature type="binding site" evidence="1">
    <location>
        <position position="173"/>
    </location>
    <ligand>
        <name>Mg(2+)</name>
        <dbReference type="ChEBI" id="CHEBI:18420"/>
    </ligand>
</feature>
<feature type="binding site" evidence="1">
    <location>
        <begin position="191"/>
        <end position="195"/>
    </location>
    <ligand>
        <name>GTP</name>
        <dbReference type="ChEBI" id="CHEBI:37565"/>
    </ligand>
</feature>
<feature type="binding site" evidence="1">
    <location>
        <position position="193"/>
    </location>
    <ligand>
        <name>Mg(2+)</name>
        <dbReference type="ChEBI" id="CHEBI:18420"/>
    </ligand>
</feature>
<feature type="binding site" evidence="1">
    <location>
        <begin position="213"/>
        <end position="216"/>
    </location>
    <ligand>
        <name>GTP</name>
        <dbReference type="ChEBI" id="CHEBI:37565"/>
    </ligand>
</feature>
<feature type="binding site" evidence="1">
    <location>
        <begin position="284"/>
        <end position="287"/>
    </location>
    <ligand>
        <name>GTP</name>
        <dbReference type="ChEBI" id="CHEBI:37565"/>
    </ligand>
</feature>
<feature type="binding site" evidence="1">
    <location>
        <begin position="315"/>
        <end position="317"/>
    </location>
    <ligand>
        <name>GTP</name>
        <dbReference type="ChEBI" id="CHEBI:37565"/>
    </ligand>
</feature>
<protein>
    <recommendedName>
        <fullName evidence="1">GTPase Obg</fullName>
        <ecNumber evidence="1">3.6.5.-</ecNumber>
    </recommendedName>
    <alternativeName>
        <fullName evidence="1">GTP-binding protein Obg</fullName>
    </alternativeName>
</protein>
<dbReference type="EC" id="3.6.5.-" evidence="1"/>
<dbReference type="EMBL" id="CU633749">
    <property type="protein sequence ID" value="CAQ70634.1"/>
    <property type="molecule type" value="Genomic_DNA"/>
</dbReference>
<dbReference type="RefSeq" id="WP_012353930.1">
    <property type="nucleotide sequence ID" value="NC_010528.1"/>
</dbReference>
<dbReference type="SMR" id="B3R898"/>
<dbReference type="GeneID" id="29762948"/>
<dbReference type="KEGG" id="cti:RALTA_A2703"/>
<dbReference type="eggNOG" id="COG0536">
    <property type="taxonomic scope" value="Bacteria"/>
</dbReference>
<dbReference type="HOGENOM" id="CLU_011747_2_0_4"/>
<dbReference type="BioCyc" id="CTAI977880:RALTA_RS13150-MONOMER"/>
<dbReference type="Proteomes" id="UP000001692">
    <property type="component" value="Chromosome 1"/>
</dbReference>
<dbReference type="GO" id="GO:0005737">
    <property type="term" value="C:cytoplasm"/>
    <property type="evidence" value="ECO:0007669"/>
    <property type="project" value="UniProtKB-SubCell"/>
</dbReference>
<dbReference type="GO" id="GO:0005525">
    <property type="term" value="F:GTP binding"/>
    <property type="evidence" value="ECO:0007669"/>
    <property type="project" value="UniProtKB-UniRule"/>
</dbReference>
<dbReference type="GO" id="GO:0003924">
    <property type="term" value="F:GTPase activity"/>
    <property type="evidence" value="ECO:0007669"/>
    <property type="project" value="UniProtKB-UniRule"/>
</dbReference>
<dbReference type="GO" id="GO:0000287">
    <property type="term" value="F:magnesium ion binding"/>
    <property type="evidence" value="ECO:0007669"/>
    <property type="project" value="InterPro"/>
</dbReference>
<dbReference type="GO" id="GO:0042254">
    <property type="term" value="P:ribosome biogenesis"/>
    <property type="evidence" value="ECO:0007669"/>
    <property type="project" value="UniProtKB-UniRule"/>
</dbReference>
<dbReference type="CDD" id="cd01898">
    <property type="entry name" value="Obg"/>
    <property type="match status" value="1"/>
</dbReference>
<dbReference type="FunFam" id="2.70.210.12:FF:000001">
    <property type="entry name" value="GTPase Obg"/>
    <property type="match status" value="1"/>
</dbReference>
<dbReference type="Gene3D" id="2.70.210.12">
    <property type="entry name" value="GTP1/OBG domain"/>
    <property type="match status" value="1"/>
</dbReference>
<dbReference type="Gene3D" id="3.40.50.300">
    <property type="entry name" value="P-loop containing nucleotide triphosphate hydrolases"/>
    <property type="match status" value="1"/>
</dbReference>
<dbReference type="HAMAP" id="MF_01454">
    <property type="entry name" value="GTPase_Obg"/>
    <property type="match status" value="1"/>
</dbReference>
<dbReference type="InterPro" id="IPR031167">
    <property type="entry name" value="G_OBG"/>
</dbReference>
<dbReference type="InterPro" id="IPR006073">
    <property type="entry name" value="GTP-bd"/>
</dbReference>
<dbReference type="InterPro" id="IPR014100">
    <property type="entry name" value="GTP-bd_Obg/CgtA"/>
</dbReference>
<dbReference type="InterPro" id="IPR006074">
    <property type="entry name" value="GTP1-OBG_CS"/>
</dbReference>
<dbReference type="InterPro" id="IPR006169">
    <property type="entry name" value="GTP1_OBG_dom"/>
</dbReference>
<dbReference type="InterPro" id="IPR036726">
    <property type="entry name" value="GTP1_OBG_dom_sf"/>
</dbReference>
<dbReference type="InterPro" id="IPR045086">
    <property type="entry name" value="OBG_GTPase"/>
</dbReference>
<dbReference type="InterPro" id="IPR027417">
    <property type="entry name" value="P-loop_NTPase"/>
</dbReference>
<dbReference type="InterPro" id="IPR005225">
    <property type="entry name" value="Small_GTP-bd"/>
</dbReference>
<dbReference type="NCBIfam" id="TIGR02729">
    <property type="entry name" value="Obg_CgtA"/>
    <property type="match status" value="1"/>
</dbReference>
<dbReference type="NCBIfam" id="NF008954">
    <property type="entry name" value="PRK12296.1"/>
    <property type="match status" value="1"/>
</dbReference>
<dbReference type="NCBIfam" id="NF008955">
    <property type="entry name" value="PRK12297.1"/>
    <property type="match status" value="1"/>
</dbReference>
<dbReference type="NCBIfam" id="NF008956">
    <property type="entry name" value="PRK12299.1"/>
    <property type="match status" value="1"/>
</dbReference>
<dbReference type="NCBIfam" id="TIGR00231">
    <property type="entry name" value="small_GTP"/>
    <property type="match status" value="1"/>
</dbReference>
<dbReference type="PANTHER" id="PTHR11702">
    <property type="entry name" value="DEVELOPMENTALLY REGULATED GTP-BINDING PROTEIN-RELATED"/>
    <property type="match status" value="1"/>
</dbReference>
<dbReference type="PANTHER" id="PTHR11702:SF31">
    <property type="entry name" value="MITOCHONDRIAL RIBOSOME-ASSOCIATED GTPASE 2"/>
    <property type="match status" value="1"/>
</dbReference>
<dbReference type="Pfam" id="PF01018">
    <property type="entry name" value="GTP1_OBG"/>
    <property type="match status" value="1"/>
</dbReference>
<dbReference type="Pfam" id="PF01926">
    <property type="entry name" value="MMR_HSR1"/>
    <property type="match status" value="1"/>
</dbReference>
<dbReference type="PIRSF" id="PIRSF002401">
    <property type="entry name" value="GTP_bd_Obg/CgtA"/>
    <property type="match status" value="1"/>
</dbReference>
<dbReference type="PRINTS" id="PR00326">
    <property type="entry name" value="GTP1OBG"/>
</dbReference>
<dbReference type="SUPFAM" id="SSF82051">
    <property type="entry name" value="Obg GTP-binding protein N-terminal domain"/>
    <property type="match status" value="1"/>
</dbReference>
<dbReference type="SUPFAM" id="SSF52540">
    <property type="entry name" value="P-loop containing nucleoside triphosphate hydrolases"/>
    <property type="match status" value="1"/>
</dbReference>
<dbReference type="PROSITE" id="PS51710">
    <property type="entry name" value="G_OBG"/>
    <property type="match status" value="1"/>
</dbReference>
<dbReference type="PROSITE" id="PS00905">
    <property type="entry name" value="GTP1_OBG"/>
    <property type="match status" value="1"/>
</dbReference>
<dbReference type="PROSITE" id="PS51883">
    <property type="entry name" value="OBG"/>
    <property type="match status" value="1"/>
</dbReference>
<sequence>MKFIDEARIEAIAGNGGNGSASFRREKFVPFGGPDGGDGGRGGSVFAVADRNINTLIDFRYAKKHVARNGENGRGSDCYGAAGEDITLRMPVGTLITDMDTGEVIADLTEHGQRVCLAEGGMGGWGNLHFKSSTNRAPRQQVDGKPGERRMLKLELKVLADVGLLGMPNAGKSTFISHISNARPKVADYPFTTLHPNLGVVRVDHEQSFVVADIPGLIEGAAEGAGLGHQFLRHLQRTGLLLHIVDLAPFDEAVDPVAEARAIVNELKKYDETLYEKPRWLVLNKLDMVPEDERAAKVKDFLKRYKWKGPVFQISALTGEGCRELIYAIKDHLQAIKAEEAAALAEPDIRLDDRLHNVDQDQREA</sequence>
<gene>
    <name evidence="1" type="primary">obg</name>
    <name type="ordered locus">RALTA_A2703</name>
</gene>
<comment type="function">
    <text evidence="1">An essential GTPase which binds GTP, GDP and possibly (p)ppGpp with moderate affinity, with high nucleotide exchange rates and a fairly low GTP hydrolysis rate. Plays a role in control of the cell cycle, stress response, ribosome biogenesis and in those bacteria that undergo differentiation, in morphogenesis control.</text>
</comment>
<comment type="cofactor">
    <cofactor evidence="1">
        <name>Mg(2+)</name>
        <dbReference type="ChEBI" id="CHEBI:18420"/>
    </cofactor>
</comment>
<comment type="subunit">
    <text evidence="1">Monomer.</text>
</comment>
<comment type="subcellular location">
    <subcellularLocation>
        <location evidence="1">Cytoplasm</location>
    </subcellularLocation>
</comment>
<comment type="similarity">
    <text evidence="1">Belongs to the TRAFAC class OBG-HflX-like GTPase superfamily. OBG GTPase family.</text>
</comment>
<reference key="1">
    <citation type="journal article" date="2008" name="Genome Res.">
        <title>Genome sequence of the beta-rhizobium Cupriavidus taiwanensis and comparative genomics of rhizobia.</title>
        <authorList>
            <person name="Amadou C."/>
            <person name="Pascal G."/>
            <person name="Mangenot S."/>
            <person name="Glew M."/>
            <person name="Bontemps C."/>
            <person name="Capela D."/>
            <person name="Carrere S."/>
            <person name="Cruveiller S."/>
            <person name="Dossat C."/>
            <person name="Lajus A."/>
            <person name="Marchetti M."/>
            <person name="Poinsot V."/>
            <person name="Rouy Z."/>
            <person name="Servin B."/>
            <person name="Saad M."/>
            <person name="Schenowitz C."/>
            <person name="Barbe V."/>
            <person name="Batut J."/>
            <person name="Medigue C."/>
            <person name="Masson-Boivin C."/>
        </authorList>
    </citation>
    <scope>NUCLEOTIDE SEQUENCE [LARGE SCALE GENOMIC DNA]</scope>
    <source>
        <strain>DSM 17343 / BCRC 17206 / CCUG 44338 / CIP 107171 / LMG 19424 / R1</strain>
    </source>
</reference>
<organism>
    <name type="scientific">Cupriavidus taiwanensis (strain DSM 17343 / BCRC 17206 / CCUG 44338 / CIP 107171 / LMG 19424 / R1)</name>
    <name type="common">Ralstonia taiwanensis (strain LMG 19424)</name>
    <dbReference type="NCBI Taxonomy" id="977880"/>
    <lineage>
        <taxon>Bacteria</taxon>
        <taxon>Pseudomonadati</taxon>
        <taxon>Pseudomonadota</taxon>
        <taxon>Betaproteobacteria</taxon>
        <taxon>Burkholderiales</taxon>
        <taxon>Burkholderiaceae</taxon>
        <taxon>Cupriavidus</taxon>
    </lineage>
</organism>
<keyword id="KW-0963">Cytoplasm</keyword>
<keyword id="KW-0342">GTP-binding</keyword>
<keyword id="KW-0378">Hydrolase</keyword>
<keyword id="KW-0460">Magnesium</keyword>
<keyword id="KW-0479">Metal-binding</keyword>
<keyword id="KW-0547">Nucleotide-binding</keyword>
<evidence type="ECO:0000255" key="1">
    <source>
        <dbReference type="HAMAP-Rule" id="MF_01454"/>
    </source>
</evidence>
<evidence type="ECO:0000255" key="2">
    <source>
        <dbReference type="PROSITE-ProRule" id="PRU01231"/>
    </source>
</evidence>
<accession>B3R898</accession>
<proteinExistence type="inferred from homology"/>
<name>OBG_CUPTR</name>